<evidence type="ECO:0000255" key="1">
    <source>
        <dbReference type="HAMAP-Rule" id="MF_01346"/>
    </source>
</evidence>
<dbReference type="EC" id="7.1.2.2" evidence="1"/>
<dbReference type="EMBL" id="CP000919">
    <property type="protein sequence ID" value="ACO18897.1"/>
    <property type="molecule type" value="Genomic_DNA"/>
</dbReference>
<dbReference type="RefSeq" id="WP_000996644.1">
    <property type="nucleotide sequence ID" value="NC_012466.1"/>
</dbReference>
<dbReference type="SMR" id="C1CF95"/>
<dbReference type="KEGG" id="sjj:SPJ_1412"/>
<dbReference type="HOGENOM" id="CLU_010091_2_1_9"/>
<dbReference type="Proteomes" id="UP000002206">
    <property type="component" value="Chromosome"/>
</dbReference>
<dbReference type="GO" id="GO:0005886">
    <property type="term" value="C:plasma membrane"/>
    <property type="evidence" value="ECO:0007669"/>
    <property type="project" value="UniProtKB-SubCell"/>
</dbReference>
<dbReference type="GO" id="GO:0045259">
    <property type="term" value="C:proton-transporting ATP synthase complex"/>
    <property type="evidence" value="ECO:0007669"/>
    <property type="project" value="UniProtKB-KW"/>
</dbReference>
<dbReference type="GO" id="GO:0043531">
    <property type="term" value="F:ADP binding"/>
    <property type="evidence" value="ECO:0007669"/>
    <property type="project" value="TreeGrafter"/>
</dbReference>
<dbReference type="GO" id="GO:0005524">
    <property type="term" value="F:ATP binding"/>
    <property type="evidence" value="ECO:0007669"/>
    <property type="project" value="UniProtKB-UniRule"/>
</dbReference>
<dbReference type="GO" id="GO:0046933">
    <property type="term" value="F:proton-transporting ATP synthase activity, rotational mechanism"/>
    <property type="evidence" value="ECO:0007669"/>
    <property type="project" value="UniProtKB-UniRule"/>
</dbReference>
<dbReference type="CDD" id="cd18113">
    <property type="entry name" value="ATP-synt_F1_alpha_C"/>
    <property type="match status" value="1"/>
</dbReference>
<dbReference type="CDD" id="cd18116">
    <property type="entry name" value="ATP-synt_F1_alpha_N"/>
    <property type="match status" value="1"/>
</dbReference>
<dbReference type="CDD" id="cd01132">
    <property type="entry name" value="F1-ATPase_alpha_CD"/>
    <property type="match status" value="1"/>
</dbReference>
<dbReference type="FunFam" id="1.20.150.20:FF:000001">
    <property type="entry name" value="ATP synthase subunit alpha"/>
    <property type="match status" value="1"/>
</dbReference>
<dbReference type="FunFam" id="2.40.30.20:FF:000001">
    <property type="entry name" value="ATP synthase subunit alpha"/>
    <property type="match status" value="1"/>
</dbReference>
<dbReference type="FunFam" id="3.40.50.300:FF:000002">
    <property type="entry name" value="ATP synthase subunit alpha"/>
    <property type="match status" value="1"/>
</dbReference>
<dbReference type="Gene3D" id="2.40.30.20">
    <property type="match status" value="1"/>
</dbReference>
<dbReference type="Gene3D" id="1.20.150.20">
    <property type="entry name" value="ATP synthase alpha/beta chain, C-terminal domain"/>
    <property type="match status" value="1"/>
</dbReference>
<dbReference type="Gene3D" id="3.40.50.300">
    <property type="entry name" value="P-loop containing nucleotide triphosphate hydrolases"/>
    <property type="match status" value="1"/>
</dbReference>
<dbReference type="HAMAP" id="MF_01346">
    <property type="entry name" value="ATP_synth_alpha_bact"/>
    <property type="match status" value="1"/>
</dbReference>
<dbReference type="InterPro" id="IPR023366">
    <property type="entry name" value="ATP_synth_asu-like_sf"/>
</dbReference>
<dbReference type="InterPro" id="IPR000793">
    <property type="entry name" value="ATP_synth_asu_C"/>
</dbReference>
<dbReference type="InterPro" id="IPR038376">
    <property type="entry name" value="ATP_synth_asu_C_sf"/>
</dbReference>
<dbReference type="InterPro" id="IPR033732">
    <property type="entry name" value="ATP_synth_F1_a_nt-bd_dom"/>
</dbReference>
<dbReference type="InterPro" id="IPR005294">
    <property type="entry name" value="ATP_synth_F1_asu"/>
</dbReference>
<dbReference type="InterPro" id="IPR004100">
    <property type="entry name" value="ATPase_F1/V1/A1_a/bsu_N"/>
</dbReference>
<dbReference type="InterPro" id="IPR036121">
    <property type="entry name" value="ATPase_F1/V1/A1_a/bsu_N_sf"/>
</dbReference>
<dbReference type="InterPro" id="IPR000194">
    <property type="entry name" value="ATPase_F1/V1/A1_a/bsu_nucl-bd"/>
</dbReference>
<dbReference type="InterPro" id="IPR027417">
    <property type="entry name" value="P-loop_NTPase"/>
</dbReference>
<dbReference type="NCBIfam" id="TIGR00962">
    <property type="entry name" value="atpA"/>
    <property type="match status" value="1"/>
</dbReference>
<dbReference type="NCBIfam" id="NF009884">
    <property type="entry name" value="PRK13343.1"/>
    <property type="match status" value="1"/>
</dbReference>
<dbReference type="PANTHER" id="PTHR48082">
    <property type="entry name" value="ATP SYNTHASE SUBUNIT ALPHA, MITOCHONDRIAL"/>
    <property type="match status" value="1"/>
</dbReference>
<dbReference type="PANTHER" id="PTHR48082:SF2">
    <property type="entry name" value="ATP SYNTHASE SUBUNIT ALPHA, MITOCHONDRIAL"/>
    <property type="match status" value="1"/>
</dbReference>
<dbReference type="Pfam" id="PF00006">
    <property type="entry name" value="ATP-synt_ab"/>
    <property type="match status" value="1"/>
</dbReference>
<dbReference type="Pfam" id="PF00306">
    <property type="entry name" value="ATP-synt_ab_C"/>
    <property type="match status" value="1"/>
</dbReference>
<dbReference type="Pfam" id="PF02874">
    <property type="entry name" value="ATP-synt_ab_N"/>
    <property type="match status" value="1"/>
</dbReference>
<dbReference type="PIRSF" id="PIRSF039088">
    <property type="entry name" value="F_ATPase_subunit_alpha"/>
    <property type="match status" value="1"/>
</dbReference>
<dbReference type="SUPFAM" id="SSF47917">
    <property type="entry name" value="C-terminal domain of alpha and beta subunits of F1 ATP synthase"/>
    <property type="match status" value="1"/>
</dbReference>
<dbReference type="SUPFAM" id="SSF50615">
    <property type="entry name" value="N-terminal domain of alpha and beta subunits of F1 ATP synthase"/>
    <property type="match status" value="1"/>
</dbReference>
<dbReference type="SUPFAM" id="SSF52540">
    <property type="entry name" value="P-loop containing nucleoside triphosphate hydrolases"/>
    <property type="match status" value="1"/>
</dbReference>
<organism>
    <name type="scientific">Streptococcus pneumoniae (strain JJA)</name>
    <dbReference type="NCBI Taxonomy" id="488222"/>
    <lineage>
        <taxon>Bacteria</taxon>
        <taxon>Bacillati</taxon>
        <taxon>Bacillota</taxon>
        <taxon>Bacilli</taxon>
        <taxon>Lactobacillales</taxon>
        <taxon>Streptococcaceae</taxon>
        <taxon>Streptococcus</taxon>
    </lineage>
</organism>
<comment type="function">
    <text evidence="1">Produces ATP from ADP in the presence of a proton gradient across the membrane. The alpha chain is a regulatory subunit.</text>
</comment>
<comment type="catalytic activity">
    <reaction evidence="1">
        <text>ATP + H2O + 4 H(+)(in) = ADP + phosphate + 5 H(+)(out)</text>
        <dbReference type="Rhea" id="RHEA:57720"/>
        <dbReference type="ChEBI" id="CHEBI:15377"/>
        <dbReference type="ChEBI" id="CHEBI:15378"/>
        <dbReference type="ChEBI" id="CHEBI:30616"/>
        <dbReference type="ChEBI" id="CHEBI:43474"/>
        <dbReference type="ChEBI" id="CHEBI:456216"/>
        <dbReference type="EC" id="7.1.2.2"/>
    </reaction>
</comment>
<comment type="subunit">
    <text evidence="1">F-type ATPases have 2 components, CF(1) - the catalytic core - and CF(0) - the membrane proton channel. CF(1) has five subunits: alpha(3), beta(3), gamma(1), delta(1), epsilon(1). CF(0) has three main subunits: a(1), b(2) and c(9-12). The alpha and beta chains form an alternating ring which encloses part of the gamma chain. CF(1) is attached to CF(0) by a central stalk formed by the gamma and epsilon chains, while a peripheral stalk is formed by the delta and b chains.</text>
</comment>
<comment type="subcellular location">
    <subcellularLocation>
        <location evidence="1">Cell membrane</location>
        <topology evidence="1">Peripheral membrane protein</topology>
    </subcellularLocation>
</comment>
<comment type="similarity">
    <text evidence="1">Belongs to the ATPase alpha/beta chains family.</text>
</comment>
<gene>
    <name evidence="1" type="primary">atpA</name>
    <name type="ordered locus">SPJ_1412</name>
</gene>
<keyword id="KW-0066">ATP synthesis</keyword>
<keyword id="KW-0067">ATP-binding</keyword>
<keyword id="KW-1003">Cell membrane</keyword>
<keyword id="KW-0139">CF(1)</keyword>
<keyword id="KW-0375">Hydrogen ion transport</keyword>
<keyword id="KW-0406">Ion transport</keyword>
<keyword id="KW-0472">Membrane</keyword>
<keyword id="KW-0547">Nucleotide-binding</keyword>
<keyword id="KW-1278">Translocase</keyword>
<keyword id="KW-0813">Transport</keyword>
<reference key="1">
    <citation type="journal article" date="2010" name="Genome Biol.">
        <title>Structure and dynamics of the pan-genome of Streptococcus pneumoniae and closely related species.</title>
        <authorList>
            <person name="Donati C."/>
            <person name="Hiller N.L."/>
            <person name="Tettelin H."/>
            <person name="Muzzi A."/>
            <person name="Croucher N.J."/>
            <person name="Angiuoli S.V."/>
            <person name="Oggioni M."/>
            <person name="Dunning Hotopp J.C."/>
            <person name="Hu F.Z."/>
            <person name="Riley D.R."/>
            <person name="Covacci A."/>
            <person name="Mitchell T.J."/>
            <person name="Bentley S.D."/>
            <person name="Kilian M."/>
            <person name="Ehrlich G.D."/>
            <person name="Rappuoli R."/>
            <person name="Moxon E.R."/>
            <person name="Masignani V."/>
        </authorList>
    </citation>
    <scope>NUCLEOTIDE SEQUENCE [LARGE SCALE GENOMIC DNA]</scope>
    <source>
        <strain>JJA</strain>
    </source>
</reference>
<proteinExistence type="inferred from homology"/>
<protein>
    <recommendedName>
        <fullName evidence="1">ATP synthase subunit alpha</fullName>
        <ecNumber evidence="1">7.1.2.2</ecNumber>
    </recommendedName>
    <alternativeName>
        <fullName evidence="1">ATP synthase F1 sector subunit alpha</fullName>
    </alternativeName>
    <alternativeName>
        <fullName evidence="1">F-ATPase subunit alpha</fullName>
    </alternativeName>
</protein>
<sequence>MAINAQEISALIKQQIENFKPNFDVTETGVVTYIGDGIARAHGLENVMSGELLNFENGSYGMAQNLESTDVGIIILGDFTDIREGDTIRRTGKIMEVPVGESLIGRVVDPLGRPVDGLGEIHTDKTRPVEAPAPGVMQRKSVSEPLQTGLKAIDALVPIGRGQRELIIGDRQTGKTTIAIDTILNQKDQDMICIYVAIGQKESTVRTQVETLRQYGALDYTIVVTASASQPSPLLFLAPYTGVAMAEEFMYQGKHVLIVYDDLSKQAVAYRELSLLLRRPPGREAFPGDVFYLHSRLLERSAKVSDELGGGSITALPFIETQAGDISAYIATNVISITDGQIFLGDGLFNAGIRPAIDAGSSVSRVGGSAQIKAMKKVAGTLRIDLASYRELEAFTKFGSDLDAATQAKLNRGRRTVEVLKQPVHKPLPVEKQVTILYALTHGFLDTVPVDDIVRFEEEFHAFFDAQHPEILETIRDTKDLPEEAVLDAAITEFLNQSSFQ</sequence>
<name>ATPA_STRZJ</name>
<feature type="chain" id="PRO_1000166558" description="ATP synthase subunit alpha">
    <location>
        <begin position="1"/>
        <end position="501"/>
    </location>
</feature>
<feature type="binding site" evidence="1">
    <location>
        <begin position="169"/>
        <end position="176"/>
    </location>
    <ligand>
        <name>ATP</name>
        <dbReference type="ChEBI" id="CHEBI:30616"/>
    </ligand>
</feature>
<feature type="site" description="Required for activity" evidence="1">
    <location>
        <position position="362"/>
    </location>
</feature>
<accession>C1CF95</accession>